<keyword id="KW-0067">ATP-binding</keyword>
<keyword id="KW-0418">Kinase</keyword>
<keyword id="KW-0460">Magnesium</keyword>
<keyword id="KW-0479">Metal-binding</keyword>
<keyword id="KW-0547">Nucleotide-binding</keyword>
<keyword id="KW-1185">Reference proteome</keyword>
<keyword id="KW-0711">Selenium</keyword>
<keyword id="KW-0712">Selenocysteine</keyword>
<keyword id="KW-0808">Transferase</keyword>
<sequence length="354" mass="38311">MSCSLINEDFDLLKAAKNPGUGAKLSAGALDKLLKNFSVRNDDNLLVGFNTSDDAAVYKINDKTALISTIDFFPPVSGDPYIFGQVAAANSLSDIYAMGGEPKLALNLFCITKDMPEDMIKEILRGGFDKVYEAGAIVCGGHTIYDDSPKYGLAVNGFVHPKKILENSTAKEGDVLILTKPIGTGILLTASKADMSPPEELDRCYKIMAFLNAKARNIMVKYKINACTDITGFGLLGHLYEMGKGSGMSIEVDYKSVPIYKSVIESAEMGMMPAGVYSNRNFVGDNIVFENVPLAYQDLMFDPQTSGGLLISVDKEDAAALYEELSQALENTPCGKPAIIGLVTKRDEKILRVS</sequence>
<accession>Q73JP8</accession>
<feature type="chain" id="PRO_0000127642" description="Selenide, water dikinase">
    <location>
        <begin position="1"/>
        <end position="354"/>
    </location>
</feature>
<feature type="active site" evidence="1">
    <location>
        <position position="21"/>
    </location>
</feature>
<feature type="binding site" description="in other chain" evidence="1">
    <location>
        <position position="24"/>
    </location>
    <ligand>
        <name>ATP</name>
        <dbReference type="ChEBI" id="CHEBI:30616"/>
        <note>ligand shared between dimeric partners</note>
    </ligand>
</feature>
<feature type="binding site" description="in other chain" evidence="1">
    <location>
        <begin position="51"/>
        <end position="53"/>
    </location>
    <ligand>
        <name>ATP</name>
        <dbReference type="ChEBI" id="CHEBI:30616"/>
        <note>ligand shared between dimeric partners</note>
    </ligand>
</feature>
<feature type="binding site" evidence="1">
    <location>
        <position position="54"/>
    </location>
    <ligand>
        <name>Mg(2+)</name>
        <dbReference type="ChEBI" id="CHEBI:18420"/>
    </ligand>
</feature>
<feature type="binding site" description="in other chain" evidence="1">
    <location>
        <position position="71"/>
    </location>
    <ligand>
        <name>ATP</name>
        <dbReference type="ChEBI" id="CHEBI:30616"/>
        <note>ligand shared between dimeric partners</note>
    </ligand>
</feature>
<feature type="binding site" description="in other chain" evidence="1">
    <location>
        <position position="94"/>
    </location>
    <ligand>
        <name>ATP</name>
        <dbReference type="ChEBI" id="CHEBI:30616"/>
        <note>ligand shared between dimeric partners</note>
    </ligand>
</feature>
<feature type="binding site" evidence="1">
    <location>
        <position position="94"/>
    </location>
    <ligand>
        <name>Mg(2+)</name>
        <dbReference type="ChEBI" id="CHEBI:18420"/>
    </ligand>
</feature>
<feature type="binding site" evidence="1">
    <location>
        <begin position="141"/>
        <end position="143"/>
    </location>
    <ligand>
        <name>ATP</name>
        <dbReference type="ChEBI" id="CHEBI:30616"/>
        <note>ligand shared between dimeric partners</note>
    </ligand>
</feature>
<feature type="binding site" evidence="1">
    <location>
        <position position="229"/>
    </location>
    <ligand>
        <name>Mg(2+)</name>
        <dbReference type="ChEBI" id="CHEBI:18420"/>
    </ligand>
</feature>
<feature type="site" description="Important for catalytic activity" evidence="1">
    <location>
        <position position="24"/>
    </location>
</feature>
<feature type="non-standard amino acid" description="Selenocysteine">
    <location>
        <position position="21"/>
    </location>
</feature>
<gene>
    <name evidence="1" type="primary">selD</name>
    <name type="ordered locus">TDE_2461</name>
</gene>
<reference key="1">
    <citation type="journal article" date="2004" name="Proc. Natl. Acad. Sci. U.S.A.">
        <title>Comparison of the genome of the oral pathogen Treponema denticola with other spirochete genomes.</title>
        <authorList>
            <person name="Seshadri R."/>
            <person name="Myers G.S.A."/>
            <person name="Tettelin H."/>
            <person name="Eisen J.A."/>
            <person name="Heidelberg J.F."/>
            <person name="Dodson R.J."/>
            <person name="Davidsen T.M."/>
            <person name="DeBoy R.T."/>
            <person name="Fouts D.E."/>
            <person name="Haft D.H."/>
            <person name="Selengut J."/>
            <person name="Ren Q."/>
            <person name="Brinkac L.M."/>
            <person name="Madupu R."/>
            <person name="Kolonay J.F."/>
            <person name="Durkin S.A."/>
            <person name="Daugherty S.C."/>
            <person name="Shetty J."/>
            <person name="Shvartsbeyn A."/>
            <person name="Gebregeorgis E."/>
            <person name="Geer K."/>
            <person name="Tsegaye G."/>
            <person name="Malek J.A."/>
            <person name="Ayodeji B."/>
            <person name="Shatsman S."/>
            <person name="McLeod M.P."/>
            <person name="Smajs D."/>
            <person name="Howell J.K."/>
            <person name="Pal S."/>
            <person name="Amin A."/>
            <person name="Vashisth P."/>
            <person name="McNeill T.Z."/>
            <person name="Xiang Q."/>
            <person name="Sodergren E."/>
            <person name="Baca E."/>
            <person name="Weinstock G.M."/>
            <person name="Norris S.J."/>
            <person name="Fraser C.M."/>
            <person name="Paulsen I.T."/>
        </authorList>
    </citation>
    <scope>NUCLEOTIDE SEQUENCE [LARGE SCALE GENOMIC DNA]</scope>
    <source>
        <strain>ATCC 35405 / DSM 14222 / CIP 103919 / JCM 8153 / KCTC 15104</strain>
    </source>
</reference>
<proteinExistence type="inferred from homology"/>
<comment type="function">
    <text evidence="1">Synthesizes selenophosphate from selenide and ATP.</text>
</comment>
<comment type="catalytic activity">
    <reaction evidence="1">
        <text>hydrogenselenide + ATP + H2O = selenophosphate + AMP + phosphate + 2 H(+)</text>
        <dbReference type="Rhea" id="RHEA:18737"/>
        <dbReference type="ChEBI" id="CHEBI:15377"/>
        <dbReference type="ChEBI" id="CHEBI:15378"/>
        <dbReference type="ChEBI" id="CHEBI:16144"/>
        <dbReference type="ChEBI" id="CHEBI:29317"/>
        <dbReference type="ChEBI" id="CHEBI:30616"/>
        <dbReference type="ChEBI" id="CHEBI:43474"/>
        <dbReference type="ChEBI" id="CHEBI:456215"/>
        <dbReference type="EC" id="2.7.9.3"/>
    </reaction>
</comment>
<comment type="cofactor">
    <cofactor evidence="1">
        <name>Mg(2+)</name>
        <dbReference type="ChEBI" id="CHEBI:18420"/>
    </cofactor>
    <text evidence="1">Binds 1 Mg(2+) ion per monomer.</text>
</comment>
<comment type="subunit">
    <text evidence="1">Homodimer.</text>
</comment>
<comment type="similarity">
    <text evidence="1">Belongs to the selenophosphate synthase 1 family. Class I subfamily.</text>
</comment>
<evidence type="ECO:0000255" key="1">
    <source>
        <dbReference type="HAMAP-Rule" id="MF_00625"/>
    </source>
</evidence>
<organism>
    <name type="scientific">Treponema denticola (strain ATCC 35405 / DSM 14222 / CIP 103919 / JCM 8153 / KCTC 15104)</name>
    <dbReference type="NCBI Taxonomy" id="243275"/>
    <lineage>
        <taxon>Bacteria</taxon>
        <taxon>Pseudomonadati</taxon>
        <taxon>Spirochaetota</taxon>
        <taxon>Spirochaetia</taxon>
        <taxon>Spirochaetales</taxon>
        <taxon>Treponemataceae</taxon>
        <taxon>Treponema</taxon>
    </lineage>
</organism>
<protein>
    <recommendedName>
        <fullName evidence="1">Selenide, water dikinase</fullName>
        <ecNumber evidence="1">2.7.9.3</ecNumber>
    </recommendedName>
    <alternativeName>
        <fullName evidence="1">Selenium donor protein</fullName>
    </alternativeName>
    <alternativeName>
        <fullName evidence="1">Selenophosphate synthase</fullName>
    </alternativeName>
</protein>
<name>SELD_TREDE</name>
<dbReference type="EC" id="2.7.9.3" evidence="1"/>
<dbReference type="EMBL" id="AE017226">
    <property type="protein sequence ID" value="AAS12978.1"/>
    <property type="molecule type" value="Genomic_DNA"/>
</dbReference>
<dbReference type="RefSeq" id="NP_973059.1">
    <property type="nucleotide sequence ID" value="NC_002967.9"/>
</dbReference>
<dbReference type="RefSeq" id="WP_010957237.1">
    <property type="nucleotide sequence ID" value="NC_002967.9"/>
</dbReference>
<dbReference type="STRING" id="243275.TDE_2461"/>
<dbReference type="PaxDb" id="243275-TDE_2461"/>
<dbReference type="GeneID" id="2739646"/>
<dbReference type="KEGG" id="tde:TDE_2461"/>
<dbReference type="PATRIC" id="fig|243275.7.peg.2328"/>
<dbReference type="eggNOG" id="COG0709">
    <property type="taxonomic scope" value="Bacteria"/>
</dbReference>
<dbReference type="HOGENOM" id="CLU_032859_0_0_12"/>
<dbReference type="OrthoDB" id="9772934at2"/>
<dbReference type="Proteomes" id="UP000008212">
    <property type="component" value="Chromosome"/>
</dbReference>
<dbReference type="GO" id="GO:0005737">
    <property type="term" value="C:cytoplasm"/>
    <property type="evidence" value="ECO:0007669"/>
    <property type="project" value="TreeGrafter"/>
</dbReference>
<dbReference type="GO" id="GO:0005524">
    <property type="term" value="F:ATP binding"/>
    <property type="evidence" value="ECO:0007669"/>
    <property type="project" value="UniProtKB-UniRule"/>
</dbReference>
<dbReference type="GO" id="GO:0000287">
    <property type="term" value="F:magnesium ion binding"/>
    <property type="evidence" value="ECO:0007669"/>
    <property type="project" value="UniProtKB-UniRule"/>
</dbReference>
<dbReference type="GO" id="GO:0004756">
    <property type="term" value="F:selenide, water dikinase activity"/>
    <property type="evidence" value="ECO:0007669"/>
    <property type="project" value="UniProtKB-UniRule"/>
</dbReference>
<dbReference type="GO" id="GO:0016260">
    <property type="term" value="P:selenocysteine biosynthetic process"/>
    <property type="evidence" value="ECO:0007669"/>
    <property type="project" value="InterPro"/>
</dbReference>
<dbReference type="CDD" id="cd02195">
    <property type="entry name" value="SelD"/>
    <property type="match status" value="1"/>
</dbReference>
<dbReference type="Gene3D" id="3.90.650.10">
    <property type="entry name" value="PurM-like C-terminal domain"/>
    <property type="match status" value="1"/>
</dbReference>
<dbReference type="Gene3D" id="3.30.1330.10">
    <property type="entry name" value="PurM-like, N-terminal domain"/>
    <property type="match status" value="1"/>
</dbReference>
<dbReference type="HAMAP" id="MF_00625">
    <property type="entry name" value="SelD"/>
    <property type="match status" value="1"/>
</dbReference>
<dbReference type="InterPro" id="IPR010918">
    <property type="entry name" value="PurM-like_C_dom"/>
</dbReference>
<dbReference type="InterPro" id="IPR036676">
    <property type="entry name" value="PurM-like_C_sf"/>
</dbReference>
<dbReference type="InterPro" id="IPR016188">
    <property type="entry name" value="PurM-like_N"/>
</dbReference>
<dbReference type="InterPro" id="IPR036921">
    <property type="entry name" value="PurM-like_N_sf"/>
</dbReference>
<dbReference type="InterPro" id="IPR023061">
    <property type="entry name" value="SelD_I"/>
</dbReference>
<dbReference type="InterPro" id="IPR004536">
    <property type="entry name" value="SPS/SelD"/>
</dbReference>
<dbReference type="NCBIfam" id="NF002098">
    <property type="entry name" value="PRK00943.1"/>
    <property type="match status" value="1"/>
</dbReference>
<dbReference type="NCBIfam" id="TIGR00476">
    <property type="entry name" value="selD"/>
    <property type="match status" value="1"/>
</dbReference>
<dbReference type="PANTHER" id="PTHR10256:SF0">
    <property type="entry name" value="INACTIVE SELENIDE, WATER DIKINASE-LIKE PROTEIN-RELATED"/>
    <property type="match status" value="1"/>
</dbReference>
<dbReference type="PANTHER" id="PTHR10256">
    <property type="entry name" value="SELENIDE, WATER DIKINASE"/>
    <property type="match status" value="1"/>
</dbReference>
<dbReference type="Pfam" id="PF00586">
    <property type="entry name" value="AIRS"/>
    <property type="match status" value="1"/>
</dbReference>
<dbReference type="Pfam" id="PF02769">
    <property type="entry name" value="AIRS_C"/>
    <property type="match status" value="1"/>
</dbReference>
<dbReference type="PIRSF" id="PIRSF036407">
    <property type="entry name" value="Selenphspht_syn"/>
    <property type="match status" value="1"/>
</dbReference>
<dbReference type="SUPFAM" id="SSF56042">
    <property type="entry name" value="PurM C-terminal domain-like"/>
    <property type="match status" value="1"/>
</dbReference>
<dbReference type="SUPFAM" id="SSF55326">
    <property type="entry name" value="PurM N-terminal domain-like"/>
    <property type="match status" value="1"/>
</dbReference>